<evidence type="ECO:0000255" key="1">
    <source>
        <dbReference type="HAMAP-Rule" id="MF_00446"/>
    </source>
</evidence>
<evidence type="ECO:0000256" key="2">
    <source>
        <dbReference type="SAM" id="MobiDB-lite"/>
    </source>
</evidence>
<dbReference type="EC" id="4.1.1.11" evidence="1"/>
<dbReference type="EMBL" id="AP009493">
    <property type="protein sequence ID" value="BAG17604.1"/>
    <property type="molecule type" value="Genomic_DNA"/>
</dbReference>
<dbReference type="RefSeq" id="WP_003964661.1">
    <property type="nucleotide sequence ID" value="NC_010572.1"/>
</dbReference>
<dbReference type="SMR" id="B1VSQ0"/>
<dbReference type="KEGG" id="sgr:SGR_775"/>
<dbReference type="eggNOG" id="COG0853">
    <property type="taxonomic scope" value="Bacteria"/>
</dbReference>
<dbReference type="HOGENOM" id="CLU_115305_2_0_11"/>
<dbReference type="UniPathway" id="UPA00028">
    <property type="reaction ID" value="UER00002"/>
</dbReference>
<dbReference type="Proteomes" id="UP000001685">
    <property type="component" value="Chromosome"/>
</dbReference>
<dbReference type="GO" id="GO:0005829">
    <property type="term" value="C:cytosol"/>
    <property type="evidence" value="ECO:0007669"/>
    <property type="project" value="TreeGrafter"/>
</dbReference>
<dbReference type="GO" id="GO:0004068">
    <property type="term" value="F:aspartate 1-decarboxylase activity"/>
    <property type="evidence" value="ECO:0007669"/>
    <property type="project" value="UniProtKB-UniRule"/>
</dbReference>
<dbReference type="GO" id="GO:0006523">
    <property type="term" value="P:alanine biosynthetic process"/>
    <property type="evidence" value="ECO:0007669"/>
    <property type="project" value="InterPro"/>
</dbReference>
<dbReference type="GO" id="GO:0015940">
    <property type="term" value="P:pantothenate biosynthetic process"/>
    <property type="evidence" value="ECO:0007669"/>
    <property type="project" value="UniProtKB-UniRule"/>
</dbReference>
<dbReference type="CDD" id="cd06919">
    <property type="entry name" value="Asp_decarbox"/>
    <property type="match status" value="1"/>
</dbReference>
<dbReference type="Gene3D" id="2.40.40.20">
    <property type="match status" value="1"/>
</dbReference>
<dbReference type="HAMAP" id="MF_00446">
    <property type="entry name" value="PanD"/>
    <property type="match status" value="1"/>
</dbReference>
<dbReference type="InterPro" id="IPR009010">
    <property type="entry name" value="Asp_de-COase-like_dom_sf"/>
</dbReference>
<dbReference type="InterPro" id="IPR003190">
    <property type="entry name" value="Asp_decarbox"/>
</dbReference>
<dbReference type="NCBIfam" id="TIGR00223">
    <property type="entry name" value="panD"/>
    <property type="match status" value="1"/>
</dbReference>
<dbReference type="PANTHER" id="PTHR21012">
    <property type="entry name" value="ASPARTATE 1-DECARBOXYLASE"/>
    <property type="match status" value="1"/>
</dbReference>
<dbReference type="PANTHER" id="PTHR21012:SF0">
    <property type="entry name" value="ASPARTATE 1-DECARBOXYLASE"/>
    <property type="match status" value="1"/>
</dbReference>
<dbReference type="Pfam" id="PF02261">
    <property type="entry name" value="Asp_decarbox"/>
    <property type="match status" value="1"/>
</dbReference>
<dbReference type="PIRSF" id="PIRSF006246">
    <property type="entry name" value="Asp_decarbox"/>
    <property type="match status" value="1"/>
</dbReference>
<dbReference type="SUPFAM" id="SSF50692">
    <property type="entry name" value="ADC-like"/>
    <property type="match status" value="1"/>
</dbReference>
<feature type="chain" id="PRO_1000192045" description="Aspartate 1-decarboxylase beta chain" evidence="1">
    <location>
        <begin position="1"/>
        <end position="24"/>
    </location>
</feature>
<feature type="chain" id="PRO_1000192046" description="Aspartate 1-decarboxylase alpha chain" evidence="1">
    <location>
        <begin position="25"/>
        <end position="141"/>
    </location>
</feature>
<feature type="region of interest" description="Disordered" evidence="2">
    <location>
        <begin position="121"/>
        <end position="141"/>
    </location>
</feature>
<feature type="active site" description="Schiff-base intermediate with substrate; via pyruvic acid" evidence="1">
    <location>
        <position position="25"/>
    </location>
</feature>
<feature type="active site" description="Proton donor" evidence="1">
    <location>
        <position position="58"/>
    </location>
</feature>
<feature type="binding site" evidence="1">
    <location>
        <position position="57"/>
    </location>
    <ligand>
        <name>substrate</name>
    </ligand>
</feature>
<feature type="binding site" evidence="1">
    <location>
        <begin position="73"/>
        <end position="75"/>
    </location>
    <ligand>
        <name>substrate</name>
    </ligand>
</feature>
<feature type="modified residue" description="Pyruvic acid (Ser)" evidence="1">
    <location>
        <position position="25"/>
    </location>
</feature>
<keyword id="KW-0068">Autocatalytic cleavage</keyword>
<keyword id="KW-0963">Cytoplasm</keyword>
<keyword id="KW-0210">Decarboxylase</keyword>
<keyword id="KW-0456">Lyase</keyword>
<keyword id="KW-0566">Pantothenate biosynthesis</keyword>
<keyword id="KW-0670">Pyruvate</keyword>
<keyword id="KW-0704">Schiff base</keyword>
<keyword id="KW-0865">Zymogen</keyword>
<name>PAND_STRGG</name>
<reference key="1">
    <citation type="journal article" date="2008" name="J. Bacteriol.">
        <title>Genome sequence of the streptomycin-producing microorganism Streptomyces griseus IFO 13350.</title>
        <authorList>
            <person name="Ohnishi Y."/>
            <person name="Ishikawa J."/>
            <person name="Hara H."/>
            <person name="Suzuki H."/>
            <person name="Ikenoya M."/>
            <person name="Ikeda H."/>
            <person name="Yamashita A."/>
            <person name="Hattori M."/>
            <person name="Horinouchi S."/>
        </authorList>
    </citation>
    <scope>NUCLEOTIDE SEQUENCE [LARGE SCALE GENOMIC DNA]</scope>
    <source>
        <strain>JCM 4626 / CBS 651.72 / NBRC 13350 / KCC S-0626 / ISP 5235</strain>
    </source>
</reference>
<protein>
    <recommendedName>
        <fullName evidence="1">Aspartate 1-decarboxylase</fullName>
        <ecNumber evidence="1">4.1.1.11</ecNumber>
    </recommendedName>
    <alternativeName>
        <fullName evidence="1">Aspartate alpha-decarboxylase</fullName>
    </alternativeName>
    <component>
        <recommendedName>
            <fullName evidence="1">Aspartate 1-decarboxylase beta chain</fullName>
        </recommendedName>
    </component>
    <component>
        <recommendedName>
            <fullName evidence="1">Aspartate 1-decarboxylase alpha chain</fullName>
        </recommendedName>
    </component>
</protein>
<gene>
    <name evidence="1" type="primary">panD</name>
    <name type="ordered locus">SGR_775</name>
</gene>
<accession>B1VSQ0</accession>
<sequence>MMRTLFKSKIHRATVTQADLHYVGSVTVDAALMEAADLLPGELVHIVDIDNGARLETYVIEGERGSGVIGINGAAAHLVHPGDLVILISYAQVDDAEARAFVPRVVHVDADNRIVALGSDASAPVPGSRTERSPQAVVAGG</sequence>
<organism>
    <name type="scientific">Streptomyces griseus subsp. griseus (strain JCM 4626 / CBS 651.72 / NBRC 13350 / KCC S-0626 / ISP 5235)</name>
    <dbReference type="NCBI Taxonomy" id="455632"/>
    <lineage>
        <taxon>Bacteria</taxon>
        <taxon>Bacillati</taxon>
        <taxon>Actinomycetota</taxon>
        <taxon>Actinomycetes</taxon>
        <taxon>Kitasatosporales</taxon>
        <taxon>Streptomycetaceae</taxon>
        <taxon>Streptomyces</taxon>
    </lineage>
</organism>
<comment type="function">
    <text evidence="1">Catalyzes the pyruvoyl-dependent decarboxylation of aspartate to produce beta-alanine.</text>
</comment>
<comment type="catalytic activity">
    <reaction evidence="1">
        <text>L-aspartate + H(+) = beta-alanine + CO2</text>
        <dbReference type="Rhea" id="RHEA:19497"/>
        <dbReference type="ChEBI" id="CHEBI:15378"/>
        <dbReference type="ChEBI" id="CHEBI:16526"/>
        <dbReference type="ChEBI" id="CHEBI:29991"/>
        <dbReference type="ChEBI" id="CHEBI:57966"/>
        <dbReference type="EC" id="4.1.1.11"/>
    </reaction>
</comment>
<comment type="cofactor">
    <cofactor evidence="1">
        <name>pyruvate</name>
        <dbReference type="ChEBI" id="CHEBI:15361"/>
    </cofactor>
    <text evidence="1">Binds 1 pyruvoyl group covalently per subunit.</text>
</comment>
<comment type="pathway">
    <text evidence="1">Cofactor biosynthesis; (R)-pantothenate biosynthesis; beta-alanine from L-aspartate: step 1/1.</text>
</comment>
<comment type="subunit">
    <text evidence="1">Heterooctamer of four alpha and four beta subunits.</text>
</comment>
<comment type="subcellular location">
    <subcellularLocation>
        <location evidence="1">Cytoplasm</location>
    </subcellularLocation>
</comment>
<comment type="PTM">
    <text evidence="1">Is synthesized initially as an inactive proenzyme, which is activated by self-cleavage at a specific serine bond to produce a beta-subunit with a hydroxyl group at its C-terminus and an alpha-subunit with a pyruvoyl group at its N-terminus.</text>
</comment>
<comment type="similarity">
    <text evidence="1">Belongs to the PanD family.</text>
</comment>
<proteinExistence type="inferred from homology"/>